<accession>P01272</accession>
<accession>Q3T0X0</accession>
<dbReference type="EMBL" id="K00107">
    <property type="protein sequence ID" value="AAA30538.1"/>
    <property type="molecule type" value="mRNA"/>
</dbReference>
<dbReference type="EMBL" id="BC102221">
    <property type="protein sequence ID" value="AAI02222.1"/>
    <property type="molecule type" value="mRNA"/>
</dbReference>
<dbReference type="PIR" id="A93970">
    <property type="entry name" value="GCBO"/>
</dbReference>
<dbReference type="RefSeq" id="NP_776341.1">
    <property type="nucleotide sequence ID" value="NM_173916.3"/>
</dbReference>
<dbReference type="PDB" id="1KX6">
    <property type="method" value="NMR"/>
    <property type="chains" value="A=53-81"/>
</dbReference>
<dbReference type="PDBsum" id="1KX6"/>
<dbReference type="BMRB" id="P01272"/>
<dbReference type="SMR" id="P01272"/>
<dbReference type="FunCoup" id="P01272">
    <property type="interactions" value="81"/>
</dbReference>
<dbReference type="STRING" id="9913.ENSBTAP00000000972"/>
<dbReference type="Ensembl" id="ENSBTAT00000000972.3">
    <property type="protein sequence ID" value="ENSBTAP00000000972.2"/>
    <property type="gene ID" value="ENSBTAG00000000730.4"/>
</dbReference>
<dbReference type="GeneID" id="280802"/>
<dbReference type="KEGG" id="bta:280802"/>
<dbReference type="CTD" id="2641"/>
<dbReference type="VEuPathDB" id="HostDB:ENSBTAG00000000730"/>
<dbReference type="VGNC" id="VGNC:29284">
    <property type="gene designation" value="GCG"/>
</dbReference>
<dbReference type="eggNOG" id="ENOG502RYPR">
    <property type="taxonomic scope" value="Eukaryota"/>
</dbReference>
<dbReference type="GeneTree" id="ENSGT00390000005372"/>
<dbReference type="HOGENOM" id="CLU_090687_0_0_1"/>
<dbReference type="InParanoid" id="P01272"/>
<dbReference type="OMA" id="MNTKRNX"/>
<dbReference type="OrthoDB" id="9904258at2759"/>
<dbReference type="Reactome" id="R-BTA-163359">
    <property type="pathway name" value="Glucagon signaling in metabolic regulation"/>
</dbReference>
<dbReference type="Reactome" id="R-BTA-381676">
    <property type="pathway name" value="Glucagon-like Peptide-1 (GLP1) regulates insulin secretion"/>
</dbReference>
<dbReference type="Reactome" id="R-BTA-381771">
    <property type="pathway name" value="Synthesis, secretion, and inactivation of Glucagon-like Peptide-1 (GLP-1)"/>
</dbReference>
<dbReference type="Reactome" id="R-BTA-416476">
    <property type="pathway name" value="G alpha (q) signalling events"/>
</dbReference>
<dbReference type="Reactome" id="R-BTA-418555">
    <property type="pathway name" value="G alpha (s) signalling events"/>
</dbReference>
<dbReference type="Reactome" id="R-BTA-420092">
    <property type="pathway name" value="Glucagon-type ligand receptors"/>
</dbReference>
<dbReference type="Reactome" id="R-BTA-422085">
    <property type="pathway name" value="Synthesis, secretion, and deacylation of Ghrelin"/>
</dbReference>
<dbReference type="EvolutionaryTrace" id="P01272"/>
<dbReference type="Proteomes" id="UP000009136">
    <property type="component" value="Chromosome 2"/>
</dbReference>
<dbReference type="Bgee" id="ENSBTAG00000000730">
    <property type="expression patterns" value="Expressed in ascending colon and 33 other cell types or tissues"/>
</dbReference>
<dbReference type="GO" id="GO:0005737">
    <property type="term" value="C:cytoplasm"/>
    <property type="evidence" value="ECO:0007669"/>
    <property type="project" value="Ensembl"/>
</dbReference>
<dbReference type="GO" id="GO:0005615">
    <property type="term" value="C:extracellular space"/>
    <property type="evidence" value="ECO:0000250"/>
    <property type="project" value="UniProtKB"/>
</dbReference>
<dbReference type="GO" id="GO:0005886">
    <property type="term" value="C:plasma membrane"/>
    <property type="evidence" value="ECO:0007669"/>
    <property type="project" value="Ensembl"/>
</dbReference>
<dbReference type="GO" id="GO:0031769">
    <property type="term" value="F:glucagon receptor binding"/>
    <property type="evidence" value="ECO:0000318"/>
    <property type="project" value="GO_Central"/>
</dbReference>
<dbReference type="GO" id="GO:0005179">
    <property type="term" value="F:hormone activity"/>
    <property type="evidence" value="ECO:0000315"/>
    <property type="project" value="AgBase"/>
</dbReference>
<dbReference type="GO" id="GO:0042802">
    <property type="term" value="F:identical protein binding"/>
    <property type="evidence" value="ECO:0007669"/>
    <property type="project" value="Ensembl"/>
</dbReference>
<dbReference type="GO" id="GO:0007189">
    <property type="term" value="P:adenylate cyclase-activating G protein-coupled receptor signaling pathway"/>
    <property type="evidence" value="ECO:0007669"/>
    <property type="project" value="Ensembl"/>
</dbReference>
<dbReference type="GO" id="GO:0007188">
    <property type="term" value="P:adenylate cyclase-modulating G protein-coupled receptor signaling pathway"/>
    <property type="evidence" value="ECO:0000318"/>
    <property type="project" value="GO_Central"/>
</dbReference>
<dbReference type="GO" id="GO:0071377">
    <property type="term" value="P:cellular response to glucagon stimulus"/>
    <property type="evidence" value="ECO:0007669"/>
    <property type="project" value="Ensembl"/>
</dbReference>
<dbReference type="GO" id="GO:0006094">
    <property type="term" value="P:gluconeogenesis"/>
    <property type="evidence" value="ECO:0007669"/>
    <property type="project" value="Ensembl"/>
</dbReference>
<dbReference type="GO" id="GO:0042593">
    <property type="term" value="P:glucose homeostasis"/>
    <property type="evidence" value="ECO:0000250"/>
    <property type="project" value="UniProtKB"/>
</dbReference>
<dbReference type="GO" id="GO:0019249">
    <property type="term" value="P:lactate biosynthetic process"/>
    <property type="evidence" value="ECO:0000315"/>
    <property type="project" value="AgBase"/>
</dbReference>
<dbReference type="GO" id="GO:0008610">
    <property type="term" value="P:lipid biosynthetic process"/>
    <property type="evidence" value="ECO:0000315"/>
    <property type="project" value="AgBase"/>
</dbReference>
<dbReference type="GO" id="GO:0043066">
    <property type="term" value="P:negative regulation of apoptotic process"/>
    <property type="evidence" value="ECO:0000318"/>
    <property type="project" value="GO_Central"/>
</dbReference>
<dbReference type="GO" id="GO:1900118">
    <property type="term" value="P:negative regulation of execution phase of apoptosis"/>
    <property type="evidence" value="ECO:0007669"/>
    <property type="project" value="Ensembl"/>
</dbReference>
<dbReference type="GO" id="GO:0090280">
    <property type="term" value="P:positive regulation of calcium ion import"/>
    <property type="evidence" value="ECO:0007669"/>
    <property type="project" value="Ensembl"/>
</dbReference>
<dbReference type="GO" id="GO:0070374">
    <property type="term" value="P:positive regulation of ERK1 and ERK2 cascade"/>
    <property type="evidence" value="ECO:0007669"/>
    <property type="project" value="Ensembl"/>
</dbReference>
<dbReference type="GO" id="GO:0045722">
    <property type="term" value="P:positive regulation of gluconeogenesis"/>
    <property type="evidence" value="ECO:0000315"/>
    <property type="project" value="AgBase"/>
</dbReference>
<dbReference type="GO" id="GO:0035774">
    <property type="term" value="P:positive regulation of insulin secretion involved in cellular response to glucose stimulus"/>
    <property type="evidence" value="ECO:0000318"/>
    <property type="project" value="GO_Central"/>
</dbReference>
<dbReference type="GO" id="GO:0010737">
    <property type="term" value="P:protein kinase A signaling"/>
    <property type="evidence" value="ECO:0000318"/>
    <property type="project" value="GO_Central"/>
</dbReference>
<dbReference type="GO" id="GO:0050796">
    <property type="term" value="P:regulation of insulin secretion"/>
    <property type="evidence" value="ECO:0000250"/>
    <property type="project" value="UniProtKB"/>
</dbReference>
<dbReference type="GO" id="GO:0014823">
    <property type="term" value="P:response to activity"/>
    <property type="evidence" value="ECO:0000250"/>
    <property type="project" value="UniProtKB"/>
</dbReference>
<dbReference type="Gene3D" id="6.10.250.590">
    <property type="match status" value="3"/>
</dbReference>
<dbReference type="InterPro" id="IPR015550">
    <property type="entry name" value="Glucagon"/>
</dbReference>
<dbReference type="InterPro" id="IPR000532">
    <property type="entry name" value="Glucagon_GIP_secretin_VIP"/>
</dbReference>
<dbReference type="PANTHER" id="PTHR11418">
    <property type="entry name" value="GLUCAGON"/>
    <property type="match status" value="1"/>
</dbReference>
<dbReference type="PANTHER" id="PTHR11418:SF0">
    <property type="entry name" value="PRO-GLUCAGON"/>
    <property type="match status" value="1"/>
</dbReference>
<dbReference type="Pfam" id="PF00123">
    <property type="entry name" value="Hormone_2"/>
    <property type="match status" value="3"/>
</dbReference>
<dbReference type="PRINTS" id="PR00275">
    <property type="entry name" value="GLUCAGON"/>
</dbReference>
<dbReference type="SMART" id="SM00070">
    <property type="entry name" value="GLUCA"/>
    <property type="match status" value="3"/>
</dbReference>
<dbReference type="PROSITE" id="PS00260">
    <property type="entry name" value="GLUCAGON"/>
    <property type="match status" value="4"/>
</dbReference>
<organism>
    <name type="scientific">Bos taurus</name>
    <name type="common">Bovine</name>
    <dbReference type="NCBI Taxonomy" id="9913"/>
    <lineage>
        <taxon>Eukaryota</taxon>
        <taxon>Metazoa</taxon>
        <taxon>Chordata</taxon>
        <taxon>Craniata</taxon>
        <taxon>Vertebrata</taxon>
        <taxon>Euteleostomi</taxon>
        <taxon>Mammalia</taxon>
        <taxon>Eutheria</taxon>
        <taxon>Laurasiatheria</taxon>
        <taxon>Artiodactyla</taxon>
        <taxon>Ruminantia</taxon>
        <taxon>Pecora</taxon>
        <taxon>Bovidae</taxon>
        <taxon>Bovinae</taxon>
        <taxon>Bos</taxon>
    </lineage>
</organism>
<reference key="1">
    <citation type="journal article" date="1983" name="Proc. Natl. Acad. Sci. U.S.A.">
        <title>Mammalian pancreatic preproglucagon contains three glucagon-related peptides.</title>
        <authorList>
            <person name="Lopez L.C."/>
            <person name="Frazier M.L."/>
            <person name="Su C.-J."/>
            <person name="Kumar A."/>
            <person name="Saunders G.F."/>
        </authorList>
    </citation>
    <scope>NUCLEOTIDE SEQUENCE [MRNA]</scope>
</reference>
<reference key="2">
    <citation type="submission" date="2005-08" db="EMBL/GenBank/DDBJ databases">
        <authorList>
            <consortium name="NIH - Mammalian Gene Collection (MGC) project"/>
        </authorList>
    </citation>
    <scope>NUCLEOTIDE SEQUENCE [LARGE SCALE MRNA]</scope>
    <source>
        <strain>Crossbred X Angus</strain>
        <tissue>Ileum</tissue>
    </source>
</reference>
<reference key="3">
    <citation type="journal article" date="1971" name="J. Biol. Chem.">
        <title>Amino acid sequence of bovine glucagon.</title>
        <authorList>
            <person name="Bromer W.W."/>
            <person name="Boucher M.E."/>
            <person name="Koffenberger J.E. Jr."/>
        </authorList>
    </citation>
    <scope>PROTEIN SEQUENCE OF 53-81</scope>
</reference>
<reference key="4">
    <citation type="journal article" date="2003" name="Mol. Endocrinol.">
        <title>Glucagon-like peptides: regulators of cell proliferation, differentiation, and apoptosis.</title>
        <authorList>
            <person name="Drucker D.J."/>
        </authorList>
    </citation>
    <scope>REVIEW</scope>
</reference>
<reference key="5">
    <citation type="journal article" date="2003" name="Am. J. Physiol.">
        <title>Glucagon and regulation of glucose metabolism.</title>
        <authorList>
            <person name="Jiang G."/>
            <person name="Zhang B.B."/>
        </authorList>
    </citation>
    <scope>REVIEW</scope>
</reference>
<reference key="6">
    <citation type="journal article" date="1999" name="Trends Endocrinol. Metab.">
        <title>Glucagon-like peptide 2.</title>
        <authorList>
            <person name="Drucker D.J."/>
        </authorList>
    </citation>
    <scope>REVIEW</scope>
</reference>
<reference key="7">
    <citation type="journal article" date="1999" name="Endocr. Rev.">
        <title>The glucagon-like peptides.</title>
        <authorList>
            <person name="Kieffer T.J."/>
            <person name="Habener J.F."/>
        </authorList>
    </citation>
    <scope>REVIEW</scope>
</reference>
<reference key="8">
    <citation type="journal article" date="1983" name="J. Mol. Biol.">
        <title>Conformation of glucagon in a lipid-water interphase by 1H nuclear magnetic resonance.</title>
        <authorList>
            <person name="Braun W."/>
            <person name="Wider G."/>
            <person name="Lee K.H."/>
            <person name="Wuethrich K."/>
        </authorList>
    </citation>
    <scope>STRUCTURE BY NMR OF 53-81</scope>
</reference>
<gene>
    <name type="primary">GCG</name>
</gene>
<evidence type="ECO:0000250" key="1"/>
<evidence type="ECO:0000250" key="2">
    <source>
        <dbReference type="UniProtKB" id="P01274"/>
    </source>
</evidence>
<evidence type="ECO:0000250" key="3">
    <source>
        <dbReference type="UniProtKB" id="P01275"/>
    </source>
</evidence>
<evidence type="ECO:0000250" key="4">
    <source>
        <dbReference type="UniProtKB" id="P06883"/>
    </source>
</evidence>
<evidence type="ECO:0000250" key="5">
    <source>
        <dbReference type="UniProtKB" id="P09686"/>
    </source>
</evidence>
<evidence type="ECO:0000250" key="6">
    <source>
        <dbReference type="UniProtKB" id="P15438"/>
    </source>
</evidence>
<evidence type="ECO:0000250" key="7">
    <source>
        <dbReference type="UniProtKB" id="P55095"/>
    </source>
</evidence>
<evidence type="ECO:0000256" key="8">
    <source>
        <dbReference type="SAM" id="MobiDB-lite"/>
    </source>
</evidence>
<evidence type="ECO:0000269" key="9">
    <source>
    </source>
</evidence>
<evidence type="ECO:0000305" key="10"/>
<evidence type="ECO:0007829" key="11">
    <source>
        <dbReference type="PDB" id="1KX6"/>
    </source>
</evidence>
<proteinExistence type="evidence at protein level"/>
<keyword id="KW-0002">3D-structure</keyword>
<keyword id="KW-0027">Amidation</keyword>
<keyword id="KW-0165">Cleavage on pair of basic residues</keyword>
<keyword id="KW-0903">Direct protein sequencing</keyword>
<keyword id="KW-0372">Hormone</keyword>
<keyword id="KW-0597">Phosphoprotein</keyword>
<keyword id="KW-1185">Reference proteome</keyword>
<keyword id="KW-0964">Secreted</keyword>
<keyword id="KW-0732">Signal</keyword>
<protein>
    <recommendedName>
        <fullName>Pro-glucagon</fullName>
    </recommendedName>
    <component>
        <recommendedName>
            <fullName>Glicentin</fullName>
        </recommendedName>
    </component>
    <component>
        <recommendedName>
            <fullName>Glicentin-related polypeptide</fullName>
            <shortName>GRPP</shortName>
        </recommendedName>
    </component>
    <component>
        <recommendedName>
            <fullName>Oxyntomodulin</fullName>
            <shortName>OXM</shortName>
            <shortName>OXY</shortName>
        </recommendedName>
    </component>
    <component>
        <recommendedName>
            <fullName>Glucagon</fullName>
        </recommendedName>
    </component>
    <component>
        <recommendedName>
            <fullName>Glucagon-like peptide 1</fullName>
            <shortName>GLP-1</shortName>
        </recommendedName>
    </component>
    <component>
        <recommendedName>
            <fullName>Glucagon-like peptide 1(7-37)</fullName>
            <shortName>GLP-1(7-37)</shortName>
        </recommendedName>
    </component>
    <component>
        <recommendedName>
            <fullName>Glucagon-like peptide 1(7-36)</fullName>
            <shortName>GLP-1(7-36)</shortName>
        </recommendedName>
    </component>
    <component>
        <recommendedName>
            <fullName>Glucagon-like peptide 2</fullName>
            <shortName>GLP-2</shortName>
        </recommendedName>
    </component>
</protein>
<comment type="function">
    <molecule>Glucagon</molecule>
    <text evidence="7">Plays a key role in glucose metabolism and homeostasis. Regulates blood glucose by increasing gluconeogenesis and decreasing glycolysis. A counterregulatory hormone of insulin, raises plasma glucose levels in response to insulin-induced hypoglycemia. Plays an important role in initiating and maintaining hyperglycemic conditions in diabetes.</text>
</comment>
<comment type="function">
    <molecule>Glucagon-like peptide 1</molecule>
    <text evidence="7">Potent stimulator of glucose-dependent insulin release. Also stimulates insulin release in response to IL6. Plays important roles on gastric motility and the suppression of plasma glucagon levels. May be involved in the suppression of satiety and stimulation of glucose disposal in peripheral tissues, independent of the actions of insulin. Has growth-promoting activities on intestinal epithelium. May also regulate the hypothalamic pituitary axis (HPA) via effects on LH, TSH, CRH, oxytocin, and vasopressin secretion. Increases islet mass through stimulation of islet neogenesis and pancreatic beta cell proliferation. Inhibits beta cell apoptosis.</text>
</comment>
<comment type="function">
    <molecule>Glucagon-like peptide 2</molecule>
    <text evidence="7">Stimulates intestinal growth and up-regulates villus height in the small intestine, concomitant with increased crypt cell proliferation and decreased enterocyte apoptosis. The gastrointestinal tract, from the stomach to the colon is the principal target for GLP-2 action. Plays a key role in nutrient homeostasis, enhancing nutrient assimilation through enhanced gastrointestinal function, as well as increasing nutrient disposal. Stimulates intestinal glucose transport and decreases mucosal permeability.</text>
</comment>
<comment type="function">
    <molecule>Oxyntomodulin</molecule>
    <text evidence="7">Significantly reduces food intake. Inhibits gastric emptying in humans. Suppression of gastric emptying may lead to increased gastric distension, which may contribute to satiety by causing a sensation of fullness.</text>
</comment>
<comment type="function">
    <molecule>Glicentin</molecule>
    <text evidence="7">May modulate gastric acid secretion and the gastro-pyloro-duodenal activity. May play an important role in intestinal mucosal growth in the early period of life.</text>
</comment>
<comment type="subcellular location">
    <subcellularLocation>
        <location evidence="3">Secreted</location>
    </subcellularLocation>
</comment>
<comment type="subcellular location">
    <molecule>Glucagon-like peptide 1</molecule>
    <subcellularLocation>
        <location evidence="3">Secreted</location>
    </subcellularLocation>
</comment>
<comment type="tissue specificity">
    <text>Glucagon is secreted in the A cells of the islets of Langerhans. GLP-1, GLP-2, oxyntomodulin and glicentin are secreted from enteroendocrine cells throughout the gastrointestinal tract.</text>
</comment>
<comment type="induction">
    <text evidence="1">Glucagon release is stimulated by hypoglycemia and inhibited by hyperglycemia, insulin, and somatostatin. GLP-1 and GLP-2 are induced in response to nutrient ingestion (By similarity).</text>
</comment>
<comment type="PTM">
    <text evidence="1">Proglucagon is post-translationally processed in a tissue-specific manner in pancreatic A cells and intestinal L cells. In pancreatic A cells, the major bioactive hormone is glucagon cleaved by PCSK2/PC2. In the intestinal L cells PCSK1/PC1 liberates GLP-1, GLP-2, glicentin and oxyntomodulin. GLP-1 is further N-terminally truncated by post-translational processing in the intestinal L cells resulting in GLP-1(7-37) GLP-1-(7-36)amide. The C-terminal amidation is neither important for the metabolism of GLP-1 nor for its effects on the endocrine pancreas (By similarity).</text>
</comment>
<comment type="similarity">
    <text evidence="10">Belongs to the glucagon family.</text>
</comment>
<sequence length="180" mass="20944">MKSLYFVAGLFVMLVQGSWQRSLQNTEEKSSSFPAPQTDPLGDPDQINEDKRHSQGTFTSDYSKYLDSRRAQDFVQWLMNTKRNKNNIAKRHDEFERHAEGTFTSDVSSYLEGQAAKEFIAWLVKGRGRRDFPEEVNIVEELRRRHADGSFSDEMNTVLDSLATRDFINWLLQTKITDRK</sequence>
<feature type="signal peptide">
    <location>
        <begin position="1"/>
        <end position="20"/>
    </location>
</feature>
<feature type="peptide" id="PRO_0000011223" description="Glicentin" evidence="2">
    <location>
        <begin position="21"/>
        <end position="89"/>
    </location>
</feature>
<feature type="peptide" id="PRO_0000011224" description="Glicentin-related polypeptide" evidence="5">
    <location>
        <begin position="21"/>
        <end position="50"/>
    </location>
</feature>
<feature type="peptide" id="PRO_0000011225" description="Oxyntomodulin" evidence="4">
    <location>
        <begin position="53"/>
        <end position="89"/>
    </location>
</feature>
<feature type="peptide" id="PRO_0000011226" description="Glucagon" evidence="9">
    <location>
        <begin position="53"/>
        <end position="81"/>
    </location>
</feature>
<feature type="propeptide" id="PRO_0000011227" evidence="3">
    <location>
        <begin position="84"/>
        <end position="89"/>
    </location>
</feature>
<feature type="peptide" id="PRO_0000011228" description="Glucagon-like peptide 1" evidence="3">
    <location>
        <begin position="92"/>
        <end position="128"/>
    </location>
</feature>
<feature type="peptide" id="PRO_0000011229" description="Glucagon-like peptide 1(7-37)" evidence="3">
    <location>
        <begin position="98"/>
        <end position="128"/>
    </location>
</feature>
<feature type="peptide" id="PRO_0000011230" description="Glucagon-like peptide 1(7-36)" evidence="3">
    <location>
        <begin position="98"/>
        <end position="127"/>
    </location>
</feature>
<feature type="propeptide" id="PRO_0000011231" evidence="6">
    <location>
        <begin position="131"/>
        <end position="145"/>
    </location>
</feature>
<feature type="peptide" id="PRO_0000011232" description="Glucagon-like peptide 2" evidence="6">
    <location>
        <begin position="146"/>
        <end position="178"/>
    </location>
</feature>
<feature type="region of interest" description="Disordered" evidence="8">
    <location>
        <begin position="25"/>
        <end position="59"/>
    </location>
</feature>
<feature type="compositionally biased region" description="Polar residues" evidence="8">
    <location>
        <begin position="25"/>
        <end position="35"/>
    </location>
</feature>
<feature type="site" description="Cleavage; by PCSK2" evidence="1">
    <location>
        <begin position="52"/>
        <end position="53"/>
    </location>
</feature>
<feature type="site" description="Cleavage; by PCSK1 and PCSK2" evidence="1">
    <location>
        <begin position="83"/>
        <end position="84"/>
    </location>
</feature>
<feature type="site" description="Cleavage; by PCSK1" evidence="1">
    <location>
        <begin position="91"/>
        <end position="92"/>
    </location>
</feature>
<feature type="site" description="Cleavage; by PCSK1" evidence="1">
    <location>
        <begin position="97"/>
        <end position="98"/>
    </location>
</feature>
<feature type="site" description="Cleavage; by PCSK1" evidence="1">
    <location>
        <begin position="130"/>
        <end position="131"/>
    </location>
</feature>
<feature type="site" description="Cleavage; by PCSK1" evidence="1">
    <location>
        <begin position="145"/>
        <end position="146"/>
    </location>
</feature>
<feature type="modified residue" description="Phosphoserine" evidence="7">
    <location>
        <position position="54"/>
    </location>
</feature>
<feature type="modified residue" description="Phosphoserine" evidence="7">
    <location>
        <position position="105"/>
    </location>
</feature>
<feature type="modified residue" description="Phosphoserine" evidence="7">
    <location>
        <position position="108"/>
    </location>
</feature>
<feature type="modified residue" description="Arginine amide" evidence="1">
    <location>
        <position position="127"/>
    </location>
</feature>
<feature type="modified residue" description="Phosphoserine" evidence="7">
    <location>
        <position position="150"/>
    </location>
</feature>
<feature type="modified residue" description="Phosphoserine" evidence="7">
    <location>
        <position position="152"/>
    </location>
</feature>
<feature type="turn" evidence="11">
    <location>
        <begin position="60"/>
        <end position="64"/>
    </location>
</feature>
<feature type="strand" evidence="11">
    <location>
        <begin position="70"/>
        <end position="73"/>
    </location>
</feature>
<feature type="helix" evidence="11">
    <location>
        <begin position="75"/>
        <end position="78"/>
    </location>
</feature>
<name>GLUC_BOVIN</name>